<dbReference type="EC" id="6.3.5.-" evidence="1"/>
<dbReference type="EMBL" id="KE651168">
    <property type="protein sequence ID" value="EEB06534.1"/>
    <property type="molecule type" value="Genomic_DNA"/>
</dbReference>
<dbReference type="RefSeq" id="XP_002172827.1">
    <property type="nucleotide sequence ID" value="XM_002172791.2"/>
</dbReference>
<dbReference type="SMR" id="B6JYB6"/>
<dbReference type="STRING" id="402676.B6JYB6"/>
<dbReference type="EnsemblFungi" id="EEB06534">
    <property type="protein sequence ID" value="EEB06534"/>
    <property type="gene ID" value="SJAG_01577"/>
</dbReference>
<dbReference type="GeneID" id="7048761"/>
<dbReference type="JaponicusDB" id="SJAG_01577">
    <property type="gene designation" value="gta2"/>
</dbReference>
<dbReference type="VEuPathDB" id="FungiDB:SJAG_01577"/>
<dbReference type="eggNOG" id="KOG2438">
    <property type="taxonomic scope" value="Eukaryota"/>
</dbReference>
<dbReference type="HOGENOM" id="CLU_019240_4_0_1"/>
<dbReference type="OMA" id="QIYAYEN"/>
<dbReference type="OrthoDB" id="1722066at2759"/>
<dbReference type="Proteomes" id="UP000001744">
    <property type="component" value="Unassembled WGS sequence"/>
</dbReference>
<dbReference type="GO" id="GO:0030956">
    <property type="term" value="C:glutamyl-tRNA(Gln) amidotransferase complex"/>
    <property type="evidence" value="ECO:0000318"/>
    <property type="project" value="GO_Central"/>
</dbReference>
<dbReference type="GO" id="GO:0005739">
    <property type="term" value="C:mitochondrion"/>
    <property type="evidence" value="ECO:0000318"/>
    <property type="project" value="GO_Central"/>
</dbReference>
<dbReference type="GO" id="GO:0005524">
    <property type="term" value="F:ATP binding"/>
    <property type="evidence" value="ECO:0007669"/>
    <property type="project" value="UniProtKB-KW"/>
</dbReference>
<dbReference type="GO" id="GO:0050567">
    <property type="term" value="F:glutaminyl-tRNA synthase (glutamine-hydrolyzing) activity"/>
    <property type="evidence" value="ECO:0000318"/>
    <property type="project" value="GO_Central"/>
</dbReference>
<dbReference type="GO" id="GO:0070681">
    <property type="term" value="P:glutaminyl-tRNAGln biosynthesis via transamidation"/>
    <property type="evidence" value="ECO:0000318"/>
    <property type="project" value="GO_Central"/>
</dbReference>
<dbReference type="GO" id="GO:0032543">
    <property type="term" value="P:mitochondrial translation"/>
    <property type="evidence" value="ECO:0000318"/>
    <property type="project" value="GO_Central"/>
</dbReference>
<dbReference type="Gene3D" id="1.10.10.410">
    <property type="match status" value="1"/>
</dbReference>
<dbReference type="HAMAP" id="MF_00121">
    <property type="entry name" value="GatB"/>
    <property type="match status" value="1"/>
</dbReference>
<dbReference type="InterPro" id="IPR017959">
    <property type="entry name" value="Asn/Gln-tRNA_amidoTrfase_suB/E"/>
</dbReference>
<dbReference type="InterPro" id="IPR006075">
    <property type="entry name" value="Asn/Gln-tRNA_Trfase_suB/E_cat"/>
</dbReference>
<dbReference type="InterPro" id="IPR018027">
    <property type="entry name" value="Asn/Gln_amidotransferase"/>
</dbReference>
<dbReference type="InterPro" id="IPR004413">
    <property type="entry name" value="GatB"/>
</dbReference>
<dbReference type="InterPro" id="IPR023168">
    <property type="entry name" value="GatB_Yqey_C_2"/>
</dbReference>
<dbReference type="InterPro" id="IPR017958">
    <property type="entry name" value="Gln-tRNA_amidoTrfase_suB_CS"/>
</dbReference>
<dbReference type="InterPro" id="IPR014746">
    <property type="entry name" value="Gln_synth/guanido_kin_cat_dom"/>
</dbReference>
<dbReference type="NCBIfam" id="TIGR00133">
    <property type="entry name" value="gatB"/>
    <property type="match status" value="1"/>
</dbReference>
<dbReference type="NCBIfam" id="NF004012">
    <property type="entry name" value="PRK05477.1-2"/>
    <property type="match status" value="1"/>
</dbReference>
<dbReference type="PANTHER" id="PTHR11659">
    <property type="entry name" value="GLUTAMYL-TRNA GLN AMIDOTRANSFERASE SUBUNIT B MITOCHONDRIAL AND PROKARYOTIC PET112-RELATED"/>
    <property type="match status" value="1"/>
</dbReference>
<dbReference type="PANTHER" id="PTHR11659:SF0">
    <property type="entry name" value="GLUTAMYL-TRNA(GLN) AMIDOTRANSFERASE SUBUNIT B, MITOCHONDRIAL"/>
    <property type="match status" value="1"/>
</dbReference>
<dbReference type="Pfam" id="PF02934">
    <property type="entry name" value="GatB_N"/>
    <property type="match status" value="1"/>
</dbReference>
<dbReference type="Pfam" id="PF02637">
    <property type="entry name" value="GatB_Yqey"/>
    <property type="match status" value="1"/>
</dbReference>
<dbReference type="SMART" id="SM00845">
    <property type="entry name" value="GatB_Yqey"/>
    <property type="match status" value="1"/>
</dbReference>
<dbReference type="SUPFAM" id="SSF55931">
    <property type="entry name" value="Glutamine synthetase/guanido kinase"/>
    <property type="match status" value="1"/>
</dbReference>
<dbReference type="PROSITE" id="PS01234">
    <property type="entry name" value="GATB"/>
    <property type="match status" value="1"/>
</dbReference>
<protein>
    <recommendedName>
        <fullName evidence="1">Glutamyl-tRNA(Gln) amidotransferase subunit B, mitochondrial</fullName>
        <shortName evidence="1">Glu-AdT subunit B</shortName>
        <ecNumber evidence="1">6.3.5.-</ecNumber>
    </recommendedName>
</protein>
<feature type="chain" id="PRO_0000413280" description="Glutamyl-tRNA(Gln) amidotransferase subunit B, mitochondrial">
    <location>
        <begin position="1"/>
        <end position="505"/>
    </location>
</feature>
<organism>
    <name type="scientific">Schizosaccharomyces japonicus (strain yFS275 / FY16936)</name>
    <name type="common">Fission yeast</name>
    <dbReference type="NCBI Taxonomy" id="402676"/>
    <lineage>
        <taxon>Eukaryota</taxon>
        <taxon>Fungi</taxon>
        <taxon>Dikarya</taxon>
        <taxon>Ascomycota</taxon>
        <taxon>Taphrinomycotina</taxon>
        <taxon>Schizosaccharomycetes</taxon>
        <taxon>Schizosaccharomycetales</taxon>
        <taxon>Schizosaccharomycetaceae</taxon>
        <taxon>Schizosaccharomyces</taxon>
    </lineage>
</organism>
<proteinExistence type="inferred from homology"/>
<reference key="1">
    <citation type="journal article" date="2011" name="Science">
        <title>Comparative functional genomics of the fission yeasts.</title>
        <authorList>
            <person name="Rhind N."/>
            <person name="Chen Z."/>
            <person name="Yassour M."/>
            <person name="Thompson D.A."/>
            <person name="Haas B.J."/>
            <person name="Habib N."/>
            <person name="Wapinski I."/>
            <person name="Roy S."/>
            <person name="Lin M.F."/>
            <person name="Heiman D.I."/>
            <person name="Young S.K."/>
            <person name="Furuya K."/>
            <person name="Guo Y."/>
            <person name="Pidoux A."/>
            <person name="Chen H.M."/>
            <person name="Robbertse B."/>
            <person name="Goldberg J.M."/>
            <person name="Aoki K."/>
            <person name="Bayne E.H."/>
            <person name="Berlin A.M."/>
            <person name="Desjardins C.A."/>
            <person name="Dobbs E."/>
            <person name="Dukaj L."/>
            <person name="Fan L."/>
            <person name="FitzGerald M.G."/>
            <person name="French C."/>
            <person name="Gujja S."/>
            <person name="Hansen K."/>
            <person name="Keifenheim D."/>
            <person name="Levin J.Z."/>
            <person name="Mosher R.A."/>
            <person name="Mueller C.A."/>
            <person name="Pfiffner J."/>
            <person name="Priest M."/>
            <person name="Russ C."/>
            <person name="Smialowska A."/>
            <person name="Swoboda P."/>
            <person name="Sykes S.M."/>
            <person name="Vaughn M."/>
            <person name="Vengrova S."/>
            <person name="Yoder R."/>
            <person name="Zeng Q."/>
            <person name="Allshire R."/>
            <person name="Baulcombe D."/>
            <person name="Birren B.W."/>
            <person name="Brown W."/>
            <person name="Ekwall K."/>
            <person name="Kellis M."/>
            <person name="Leatherwood J."/>
            <person name="Levin H."/>
            <person name="Margalit H."/>
            <person name="Martienssen R."/>
            <person name="Nieduszynski C.A."/>
            <person name="Spatafora J.W."/>
            <person name="Friedman N."/>
            <person name="Dalgaard J.Z."/>
            <person name="Baumann P."/>
            <person name="Niki H."/>
            <person name="Regev A."/>
            <person name="Nusbaum C."/>
        </authorList>
    </citation>
    <scope>NUCLEOTIDE SEQUENCE [LARGE SCALE GENOMIC DNA]</scope>
    <source>
        <strain>yFS275 / FY16936</strain>
    </source>
</reference>
<keyword id="KW-0067">ATP-binding</keyword>
<keyword id="KW-0436">Ligase</keyword>
<keyword id="KW-0496">Mitochondrion</keyword>
<keyword id="KW-0547">Nucleotide-binding</keyword>
<keyword id="KW-0648">Protein biosynthesis</keyword>
<keyword id="KW-1185">Reference proteome</keyword>
<name>GATB_SCHJY</name>
<gene>
    <name type="ORF">SJAG_01577</name>
</gene>
<comment type="function">
    <text evidence="1">Allows the formation of correctly charged Gln-tRNA(Gln) through the transamidation of misacylated Glu-tRNA(Gln) in the mitochondria. The reaction takes place in the presence of glutamine and ATP through an activated gamma-phospho-Glu-tRNA(Gln).</text>
</comment>
<comment type="catalytic activity">
    <reaction evidence="1">
        <text>L-glutamyl-tRNA(Gln) + L-glutamine + ATP + H2O = L-glutaminyl-tRNA(Gln) + L-glutamate + ADP + phosphate + H(+)</text>
        <dbReference type="Rhea" id="RHEA:17521"/>
        <dbReference type="Rhea" id="RHEA-COMP:9681"/>
        <dbReference type="Rhea" id="RHEA-COMP:9684"/>
        <dbReference type="ChEBI" id="CHEBI:15377"/>
        <dbReference type="ChEBI" id="CHEBI:15378"/>
        <dbReference type="ChEBI" id="CHEBI:29985"/>
        <dbReference type="ChEBI" id="CHEBI:30616"/>
        <dbReference type="ChEBI" id="CHEBI:43474"/>
        <dbReference type="ChEBI" id="CHEBI:58359"/>
        <dbReference type="ChEBI" id="CHEBI:78520"/>
        <dbReference type="ChEBI" id="CHEBI:78521"/>
        <dbReference type="ChEBI" id="CHEBI:456216"/>
    </reaction>
</comment>
<comment type="subunit">
    <text evidence="1">Subunit of the heterotrimeric GatCAB amidotransferase (AdT) complex, composed of A, B and C subunits.</text>
</comment>
<comment type="subcellular location">
    <subcellularLocation>
        <location evidence="1">Mitochondrion</location>
    </subcellularLocation>
</comment>
<comment type="miscellaneous">
    <text evidence="1">This protein may be expected to contain an N-terminal transit peptide but none has been predicted.</text>
</comment>
<comment type="similarity">
    <text evidence="1">Belongs to the GatB/GatE family. GatB subfamily.</text>
</comment>
<accession>B6JYB6</accession>
<sequence>MSSLARWIITIGLEVHVQLSTKLKLFSRALAENHKAPNSAVSFFDISLPGTLPIVNPEAIRLATKAALVCNCEIAPSLEFDRKHYVYSDQRAGFQITQKRRPLGTNGFVRLNAALDGVEKDQLVEIKCLQLEQDTGKTVNELNEDLVLLDFNRANVPLIEVVTAPCFHSPHDAACFLRKLQTILRLANVSDAKMELGNMRCDVNVSVASAENPTKQLATVELKNLPSIRYVEIASELEAKRQIELLNNGSSPVPETRSYDVEKNATVFLRKKRGPSDYMYLPEADIPEITLTSAYVDDVRKSIGPSVDELLETLLQKKYFNLQDAKALLQTEDGLSYYQVLVGELEKVTSSMSPDVQLKAEKLIPFWLVNEYVGDCANAPDEKRDLDTIPPADLAFLLGNLANGTLSAYAAKHILQLAVQDPKKNSIYKLVNENANAEFDENTLKDLVNELIQANGDKVNALKVGKDGVLNWFIGNVMRRSSGKAKPDEIKRLINNTVLCENSSK</sequence>
<evidence type="ECO:0000255" key="1">
    <source>
        <dbReference type="HAMAP-Rule" id="MF_03147"/>
    </source>
</evidence>